<gene>
    <name type="ORF">GM20711</name>
</gene>
<organism>
    <name type="scientific">Drosophila sechellia</name>
    <name type="common">Fruit fly</name>
    <dbReference type="NCBI Taxonomy" id="7238"/>
    <lineage>
        <taxon>Eukaryota</taxon>
        <taxon>Metazoa</taxon>
        <taxon>Ecdysozoa</taxon>
        <taxon>Arthropoda</taxon>
        <taxon>Hexapoda</taxon>
        <taxon>Insecta</taxon>
        <taxon>Pterygota</taxon>
        <taxon>Neoptera</taxon>
        <taxon>Endopterygota</taxon>
        <taxon>Diptera</taxon>
        <taxon>Brachycera</taxon>
        <taxon>Muscomorpha</taxon>
        <taxon>Ephydroidea</taxon>
        <taxon>Drosophilidae</taxon>
        <taxon>Drosophila</taxon>
        <taxon>Sophophora</taxon>
    </lineage>
</organism>
<proteinExistence type="inferred from homology"/>
<sequence>MLRQLRLTMDISGWIFLPWRRSMSNMKDSPPPPPPLASTFDDVIVDYEDPDYLPLPEYPVRPNEPLETRKQRLLYQSRKRGMLENDLLLSTFAAKHLQNFSAEQTAQYDQLINGVSNDWDIYYWATEVKPTPKEYDTEIMGLLKEHVKNAERVTRLRQPDLNA</sequence>
<comment type="function">
    <text evidence="1">Plays an essential role in the assembly of succinate dehydrogenase (SDH), an enzyme complex (also referred to as respiratory complex II) that is a component of both the tricarboxylic acid (TCA) cycle and the mitochondrial electron transport chain, and which couples the oxidation of succinate to fumarate with the reduction of ubiquinone (coenzyme Q) to ubiquinol. Required for flavinylation (covalent attachment of FAD) of the flavoprotein subunit of the SDH catalytic dimer.</text>
</comment>
<comment type="subunit">
    <text evidence="1">Interacts with the flavoprotein subunit within the SDH catalytic dimer.</text>
</comment>
<comment type="subcellular location">
    <subcellularLocation>
        <location evidence="1">Mitochondrion matrix</location>
    </subcellularLocation>
</comment>
<comment type="similarity">
    <text evidence="1">Belongs to the SDHAF2 family.</text>
</comment>
<reference key="1">
    <citation type="journal article" date="2007" name="Nature">
        <title>Evolution of genes and genomes on the Drosophila phylogeny.</title>
        <authorList>
            <consortium name="Drosophila 12 genomes consortium"/>
        </authorList>
    </citation>
    <scope>NUCLEOTIDE SEQUENCE [LARGE SCALE GENOMIC DNA]</scope>
    <source>
        <strain>Rob3c / Tucson 14021-0248.25</strain>
    </source>
</reference>
<evidence type="ECO:0000255" key="1">
    <source>
        <dbReference type="HAMAP-Rule" id="MF_03057"/>
    </source>
</evidence>
<feature type="transit peptide" description="Mitochondrion" evidence="1">
    <location>
        <begin position="1"/>
        <end position="23"/>
    </location>
</feature>
<feature type="chain" id="PRO_0000383175" description="Succinate dehydrogenase assembly factor 2-A, mitochondrial">
    <location>
        <begin position="24"/>
        <end position="163"/>
    </location>
</feature>
<name>SDF2A_DROSE</name>
<dbReference type="EMBL" id="CH480816">
    <property type="protein sequence ID" value="EDW46896.1"/>
    <property type="molecule type" value="Genomic_DNA"/>
</dbReference>
<dbReference type="SMR" id="B4HRL4"/>
<dbReference type="STRING" id="7238.B4HRL4"/>
<dbReference type="EnsemblMetazoa" id="FBtr0203696">
    <property type="protein sequence ID" value="FBpp0202188"/>
    <property type="gene ID" value="FBgn0175592"/>
</dbReference>
<dbReference type="EnsemblMetazoa" id="XM_002032847.2">
    <property type="protein sequence ID" value="XP_002032883.1"/>
    <property type="gene ID" value="LOC6608137"/>
</dbReference>
<dbReference type="GeneID" id="6608137"/>
<dbReference type="KEGG" id="dse:6608137"/>
<dbReference type="HOGENOM" id="CLU_103054_0_1_1"/>
<dbReference type="OMA" id="YGKPQNP"/>
<dbReference type="OrthoDB" id="6872at7215"/>
<dbReference type="PhylomeDB" id="B4HRL4"/>
<dbReference type="Proteomes" id="UP000001292">
    <property type="component" value="Unassembled WGS sequence"/>
</dbReference>
<dbReference type="GO" id="GO:0005759">
    <property type="term" value="C:mitochondrial matrix"/>
    <property type="evidence" value="ECO:0007669"/>
    <property type="project" value="UniProtKB-SubCell"/>
</dbReference>
<dbReference type="GO" id="GO:0005739">
    <property type="term" value="C:mitochondrion"/>
    <property type="evidence" value="ECO:0000250"/>
    <property type="project" value="UniProtKB"/>
</dbReference>
<dbReference type="GO" id="GO:0055070">
    <property type="term" value="P:copper ion homeostasis"/>
    <property type="evidence" value="ECO:0007669"/>
    <property type="project" value="EnsemblMetazoa"/>
</dbReference>
<dbReference type="GO" id="GO:0006121">
    <property type="term" value="P:mitochondrial electron transport, succinate to ubiquinone"/>
    <property type="evidence" value="ECO:0000250"/>
    <property type="project" value="UniProtKB"/>
</dbReference>
<dbReference type="GO" id="GO:0034553">
    <property type="term" value="P:mitochondrial respiratory chain complex II assembly"/>
    <property type="evidence" value="ECO:0007669"/>
    <property type="project" value="TreeGrafter"/>
</dbReference>
<dbReference type="GO" id="GO:0018293">
    <property type="term" value="P:protein-FAD linkage"/>
    <property type="evidence" value="ECO:0000250"/>
    <property type="project" value="UniProtKB"/>
</dbReference>
<dbReference type="GO" id="GO:0006099">
    <property type="term" value="P:tricarboxylic acid cycle"/>
    <property type="evidence" value="ECO:0007669"/>
    <property type="project" value="TreeGrafter"/>
</dbReference>
<dbReference type="FunFam" id="1.10.150.250:FF:000002">
    <property type="entry name" value="Succinate dehydrogenase assembly factor 2, mitochondrial"/>
    <property type="match status" value="1"/>
</dbReference>
<dbReference type="Gene3D" id="1.10.150.250">
    <property type="entry name" value="Flavinator of succinate dehydrogenase"/>
    <property type="match status" value="1"/>
</dbReference>
<dbReference type="HAMAP" id="MF_03057">
    <property type="entry name" value="SDHAF2"/>
    <property type="match status" value="1"/>
</dbReference>
<dbReference type="InterPro" id="IPR005631">
    <property type="entry name" value="SDH"/>
</dbReference>
<dbReference type="InterPro" id="IPR036714">
    <property type="entry name" value="SDH_sf"/>
</dbReference>
<dbReference type="InterPro" id="IPR028882">
    <property type="entry name" value="SDHAF2"/>
</dbReference>
<dbReference type="PANTHER" id="PTHR12469">
    <property type="entry name" value="PROTEIN EMI5 HOMOLOG, MITOCHONDRIAL"/>
    <property type="match status" value="1"/>
</dbReference>
<dbReference type="PANTHER" id="PTHR12469:SF2">
    <property type="entry name" value="SUCCINATE DEHYDROGENASE ASSEMBLY FACTOR 2, MITOCHONDRIAL"/>
    <property type="match status" value="1"/>
</dbReference>
<dbReference type="Pfam" id="PF03937">
    <property type="entry name" value="Sdh5"/>
    <property type="match status" value="1"/>
</dbReference>
<dbReference type="SUPFAM" id="SSF109910">
    <property type="entry name" value="YgfY-like"/>
    <property type="match status" value="1"/>
</dbReference>
<accession>B4HRL4</accession>
<protein>
    <recommendedName>
        <fullName evidence="1">Succinate dehydrogenase assembly factor 2-A, mitochondrial</fullName>
        <shortName evidence="1">SDH assembly factor 2-A</shortName>
        <shortName evidence="1">SDHAF2-A</shortName>
    </recommendedName>
</protein>
<keyword id="KW-0143">Chaperone</keyword>
<keyword id="KW-0496">Mitochondrion</keyword>
<keyword id="KW-1185">Reference proteome</keyword>
<keyword id="KW-0809">Transit peptide</keyword>